<organism>
    <name type="scientific">Streptomyces avermitilis (strain ATCC 31267 / DSM 46492 / JCM 5070 / NBRC 14893 / NCIMB 12804 / NRRL 8165 / MA-4680)</name>
    <dbReference type="NCBI Taxonomy" id="227882"/>
    <lineage>
        <taxon>Bacteria</taxon>
        <taxon>Bacillati</taxon>
        <taxon>Actinomycetota</taxon>
        <taxon>Actinomycetes</taxon>
        <taxon>Kitasatosporales</taxon>
        <taxon>Streptomycetaceae</taxon>
        <taxon>Streptomyces</taxon>
    </lineage>
</organism>
<sequence>MSVRELVVLGTASQVPTRHRNHNGYLLRWDGEGILFDPGEGTQRQMLRAGVAAHDLHRICVTHFHGDHSLGLAGVIQRINLDRVPHEITAHYPGSGQRFFERLRYATAYRETVALTEAPVAADGVIADTPAYVLETRRLSHPVESFGYRLVEPDGRRMLPERLAAHGIKGPDVGRIQREGAIGGVSLEDVSEVRHGQRFAFVMDTRLCEGVHALAEGCDMLVIESTFLDGDHQLAEDHGHLTAGQAGRVAKDAGVRHLVLTHFSQRYSDPDAFEREARAGGFEGELTVAHDLLRVPVPKRH</sequence>
<proteinExistence type="inferred from homology"/>
<name>RNZ_STRAW</name>
<feature type="chain" id="PRO_0000155903" description="Ribonuclease Z">
    <location>
        <begin position="1"/>
        <end position="301"/>
    </location>
</feature>
<feature type="active site" description="Proton acceptor" evidence="1">
    <location>
        <position position="67"/>
    </location>
</feature>
<feature type="binding site" evidence="1">
    <location>
        <position position="63"/>
    </location>
    <ligand>
        <name>Zn(2+)</name>
        <dbReference type="ChEBI" id="CHEBI:29105"/>
        <label>1</label>
        <note>catalytic</note>
    </ligand>
</feature>
<feature type="binding site" evidence="1">
    <location>
        <position position="65"/>
    </location>
    <ligand>
        <name>Zn(2+)</name>
        <dbReference type="ChEBI" id="CHEBI:29105"/>
        <label>1</label>
        <note>catalytic</note>
    </ligand>
</feature>
<feature type="binding site" evidence="1">
    <location>
        <position position="67"/>
    </location>
    <ligand>
        <name>Zn(2+)</name>
        <dbReference type="ChEBI" id="CHEBI:29105"/>
        <label>2</label>
        <note>catalytic</note>
    </ligand>
</feature>
<feature type="binding site" evidence="1">
    <location>
        <position position="68"/>
    </location>
    <ligand>
        <name>Zn(2+)</name>
        <dbReference type="ChEBI" id="CHEBI:29105"/>
        <label>2</label>
        <note>catalytic</note>
    </ligand>
</feature>
<feature type="binding site" evidence="1">
    <location>
        <position position="141"/>
    </location>
    <ligand>
        <name>Zn(2+)</name>
        <dbReference type="ChEBI" id="CHEBI:29105"/>
        <label>1</label>
        <note>catalytic</note>
    </ligand>
</feature>
<feature type="binding site" evidence="1">
    <location>
        <position position="204"/>
    </location>
    <ligand>
        <name>Zn(2+)</name>
        <dbReference type="ChEBI" id="CHEBI:29105"/>
        <label>1</label>
        <note>catalytic</note>
    </ligand>
</feature>
<feature type="binding site" evidence="1">
    <location>
        <position position="204"/>
    </location>
    <ligand>
        <name>Zn(2+)</name>
        <dbReference type="ChEBI" id="CHEBI:29105"/>
        <label>2</label>
        <note>catalytic</note>
    </ligand>
</feature>
<feature type="binding site" evidence="1">
    <location>
        <position position="262"/>
    </location>
    <ligand>
        <name>Zn(2+)</name>
        <dbReference type="ChEBI" id="CHEBI:29105"/>
        <label>2</label>
        <note>catalytic</note>
    </ligand>
</feature>
<accession>Q82BX8</accession>
<keyword id="KW-0255">Endonuclease</keyword>
<keyword id="KW-0378">Hydrolase</keyword>
<keyword id="KW-0479">Metal-binding</keyword>
<keyword id="KW-0540">Nuclease</keyword>
<keyword id="KW-1185">Reference proteome</keyword>
<keyword id="KW-0819">tRNA processing</keyword>
<keyword id="KW-0862">Zinc</keyword>
<gene>
    <name evidence="1" type="primary">rnz</name>
    <name type="ordered locus">SAV_5576</name>
</gene>
<comment type="function">
    <text evidence="1">Zinc phosphodiesterase, which displays some tRNA 3'-processing endonuclease activity. Probably involved in tRNA maturation, by removing a 3'-trailer from precursor tRNA.</text>
</comment>
<comment type="catalytic activity">
    <reaction evidence="1">
        <text>Endonucleolytic cleavage of RNA, removing extra 3' nucleotides from tRNA precursor, generating 3' termini of tRNAs. A 3'-hydroxy group is left at the tRNA terminus and a 5'-phosphoryl group is left at the trailer molecule.</text>
        <dbReference type="EC" id="3.1.26.11"/>
    </reaction>
</comment>
<comment type="cofactor">
    <cofactor evidence="1">
        <name>Zn(2+)</name>
        <dbReference type="ChEBI" id="CHEBI:29105"/>
    </cofactor>
    <text evidence="1">Binds 2 Zn(2+) ions.</text>
</comment>
<comment type="subunit">
    <text evidence="1">Homodimer.</text>
</comment>
<comment type="similarity">
    <text evidence="1">Belongs to the RNase Z family.</text>
</comment>
<protein>
    <recommendedName>
        <fullName evidence="1">Ribonuclease Z</fullName>
        <shortName evidence="1">RNase Z</shortName>
        <ecNumber evidence="1">3.1.26.11</ecNumber>
    </recommendedName>
    <alternativeName>
        <fullName evidence="1">tRNA 3 endonuclease</fullName>
    </alternativeName>
    <alternativeName>
        <fullName evidence="1">tRNase Z</fullName>
    </alternativeName>
</protein>
<reference key="1">
    <citation type="journal article" date="2001" name="Proc. Natl. Acad. Sci. U.S.A.">
        <title>Genome sequence of an industrial microorganism Streptomyces avermitilis: deducing the ability of producing secondary metabolites.</title>
        <authorList>
            <person name="Omura S."/>
            <person name="Ikeda H."/>
            <person name="Ishikawa J."/>
            <person name="Hanamoto A."/>
            <person name="Takahashi C."/>
            <person name="Shinose M."/>
            <person name="Takahashi Y."/>
            <person name="Horikawa H."/>
            <person name="Nakazawa H."/>
            <person name="Osonoe T."/>
            <person name="Kikuchi H."/>
            <person name="Shiba T."/>
            <person name="Sakaki Y."/>
            <person name="Hattori M."/>
        </authorList>
    </citation>
    <scope>NUCLEOTIDE SEQUENCE [LARGE SCALE GENOMIC DNA]</scope>
    <source>
        <strain>ATCC 31267 / DSM 46492 / JCM 5070 / NBRC 14893 / NCIMB 12804 / NRRL 8165 / MA-4680</strain>
    </source>
</reference>
<reference key="2">
    <citation type="journal article" date="2003" name="Nat. Biotechnol.">
        <title>Complete genome sequence and comparative analysis of the industrial microorganism Streptomyces avermitilis.</title>
        <authorList>
            <person name="Ikeda H."/>
            <person name="Ishikawa J."/>
            <person name="Hanamoto A."/>
            <person name="Shinose M."/>
            <person name="Kikuchi H."/>
            <person name="Shiba T."/>
            <person name="Sakaki Y."/>
            <person name="Hattori M."/>
            <person name="Omura S."/>
        </authorList>
    </citation>
    <scope>NUCLEOTIDE SEQUENCE [LARGE SCALE GENOMIC DNA]</scope>
    <source>
        <strain>ATCC 31267 / DSM 46492 / JCM 5070 / NBRC 14893 / NCIMB 12804 / NRRL 8165 / MA-4680</strain>
    </source>
</reference>
<dbReference type="EC" id="3.1.26.11" evidence="1"/>
<dbReference type="EMBL" id="BA000030">
    <property type="protein sequence ID" value="BAC73288.1"/>
    <property type="molecule type" value="Genomic_DNA"/>
</dbReference>
<dbReference type="RefSeq" id="WP_010986978.1">
    <property type="nucleotide sequence ID" value="NZ_JZJK01000020.1"/>
</dbReference>
<dbReference type="SMR" id="Q82BX8"/>
<dbReference type="GeneID" id="41542665"/>
<dbReference type="KEGG" id="sma:SAVERM_5576"/>
<dbReference type="eggNOG" id="COG1234">
    <property type="taxonomic scope" value="Bacteria"/>
</dbReference>
<dbReference type="HOGENOM" id="CLU_031317_2_1_11"/>
<dbReference type="OrthoDB" id="9800940at2"/>
<dbReference type="Proteomes" id="UP000000428">
    <property type="component" value="Chromosome"/>
</dbReference>
<dbReference type="GO" id="GO:0042781">
    <property type="term" value="F:3'-tRNA processing endoribonuclease activity"/>
    <property type="evidence" value="ECO:0007669"/>
    <property type="project" value="UniProtKB-UniRule"/>
</dbReference>
<dbReference type="GO" id="GO:0008270">
    <property type="term" value="F:zinc ion binding"/>
    <property type="evidence" value="ECO:0007669"/>
    <property type="project" value="UniProtKB-UniRule"/>
</dbReference>
<dbReference type="CDD" id="cd07717">
    <property type="entry name" value="RNaseZ_ZiPD-like_MBL-fold"/>
    <property type="match status" value="1"/>
</dbReference>
<dbReference type="Gene3D" id="3.60.15.10">
    <property type="entry name" value="Ribonuclease Z/Hydroxyacylglutathione hydrolase-like"/>
    <property type="match status" value="1"/>
</dbReference>
<dbReference type="HAMAP" id="MF_01818">
    <property type="entry name" value="RNase_Z_BN"/>
    <property type="match status" value="1"/>
</dbReference>
<dbReference type="InterPro" id="IPR001279">
    <property type="entry name" value="Metallo-B-lactamas"/>
</dbReference>
<dbReference type="InterPro" id="IPR036866">
    <property type="entry name" value="RibonucZ/Hydroxyglut_hydro"/>
</dbReference>
<dbReference type="InterPro" id="IPR013471">
    <property type="entry name" value="RNase_Z/BN"/>
</dbReference>
<dbReference type="NCBIfam" id="NF000805">
    <property type="entry name" value="PRK00055.2-3"/>
    <property type="match status" value="1"/>
</dbReference>
<dbReference type="PANTHER" id="PTHR46018">
    <property type="entry name" value="ZINC PHOSPHODIESTERASE ELAC PROTEIN 1"/>
    <property type="match status" value="1"/>
</dbReference>
<dbReference type="PANTHER" id="PTHR46018:SF2">
    <property type="entry name" value="ZINC PHOSPHODIESTERASE ELAC PROTEIN 1"/>
    <property type="match status" value="1"/>
</dbReference>
<dbReference type="Pfam" id="PF00753">
    <property type="entry name" value="Lactamase_B"/>
    <property type="match status" value="1"/>
</dbReference>
<dbReference type="Pfam" id="PF12706">
    <property type="entry name" value="Lactamase_B_2"/>
    <property type="match status" value="1"/>
</dbReference>
<dbReference type="SUPFAM" id="SSF56281">
    <property type="entry name" value="Metallo-hydrolase/oxidoreductase"/>
    <property type="match status" value="1"/>
</dbReference>
<evidence type="ECO:0000255" key="1">
    <source>
        <dbReference type="HAMAP-Rule" id="MF_01818"/>
    </source>
</evidence>